<comment type="similarity">
    <text evidence="1">Belongs to the UPF0181 family.</text>
</comment>
<accession>B5BHD3</accession>
<name>YOAH_SALPK</name>
<organism>
    <name type="scientific">Salmonella paratyphi A (strain AKU_12601)</name>
    <dbReference type="NCBI Taxonomy" id="554290"/>
    <lineage>
        <taxon>Bacteria</taxon>
        <taxon>Pseudomonadati</taxon>
        <taxon>Pseudomonadota</taxon>
        <taxon>Gammaproteobacteria</taxon>
        <taxon>Enterobacterales</taxon>
        <taxon>Enterobacteriaceae</taxon>
        <taxon>Salmonella</taxon>
    </lineage>
</organism>
<proteinExistence type="inferred from homology"/>
<dbReference type="EMBL" id="FM200053">
    <property type="protein sequence ID" value="CAR59131.1"/>
    <property type="molecule type" value="Genomic_DNA"/>
</dbReference>
<dbReference type="RefSeq" id="WP_000457328.1">
    <property type="nucleotide sequence ID" value="NC_011147.1"/>
</dbReference>
<dbReference type="SMR" id="B5BHD3"/>
<dbReference type="KEGG" id="sek:SSPA0980"/>
<dbReference type="HOGENOM" id="CLU_185263_0_0_6"/>
<dbReference type="Proteomes" id="UP000001869">
    <property type="component" value="Chromosome"/>
</dbReference>
<dbReference type="HAMAP" id="MF_00507">
    <property type="entry name" value="UPF0181"/>
    <property type="match status" value="1"/>
</dbReference>
<dbReference type="InterPro" id="IPR005371">
    <property type="entry name" value="UPF0181"/>
</dbReference>
<dbReference type="NCBIfam" id="NF003476">
    <property type="entry name" value="PRK05114.1"/>
    <property type="match status" value="1"/>
</dbReference>
<dbReference type="Pfam" id="PF03701">
    <property type="entry name" value="UPF0181"/>
    <property type="match status" value="1"/>
</dbReference>
<protein>
    <recommendedName>
        <fullName evidence="1">UPF0181 protein YoaH</fullName>
    </recommendedName>
</protein>
<gene>
    <name evidence="1" type="primary">yoaH</name>
    <name type="ordered locus">SSPA0980</name>
</gene>
<feature type="chain" id="PRO_1000127059" description="UPF0181 protein YoaH">
    <location>
        <begin position="1"/>
        <end position="59"/>
    </location>
</feature>
<sequence length="59" mass="6514">MFAGLPSLSHEQQQKAVERIQELMSQGMSSGEAIAQVAGELRANHTGERIVARFEDEDE</sequence>
<reference key="1">
    <citation type="journal article" date="2009" name="BMC Genomics">
        <title>Pseudogene accumulation in the evolutionary histories of Salmonella enterica serovars Paratyphi A and Typhi.</title>
        <authorList>
            <person name="Holt K.E."/>
            <person name="Thomson N.R."/>
            <person name="Wain J."/>
            <person name="Langridge G.C."/>
            <person name="Hasan R."/>
            <person name="Bhutta Z.A."/>
            <person name="Quail M.A."/>
            <person name="Norbertczak H."/>
            <person name="Walker D."/>
            <person name="Simmonds M."/>
            <person name="White B."/>
            <person name="Bason N."/>
            <person name="Mungall K."/>
            <person name="Dougan G."/>
            <person name="Parkhill J."/>
        </authorList>
    </citation>
    <scope>NUCLEOTIDE SEQUENCE [LARGE SCALE GENOMIC DNA]</scope>
    <source>
        <strain>AKU_12601</strain>
    </source>
</reference>
<evidence type="ECO:0000255" key="1">
    <source>
        <dbReference type="HAMAP-Rule" id="MF_00507"/>
    </source>
</evidence>